<feature type="signal peptide" evidence="1">
    <location>
        <begin position="1"/>
        <end position="21"/>
    </location>
</feature>
<feature type="chain" id="PRO_0000014230" description="Uncharacterized protein RP864">
    <location>
        <begin position="22"/>
        <end position="213"/>
    </location>
</feature>
<reference key="1">
    <citation type="journal article" date="1998" name="Nature">
        <title>The genome sequence of Rickettsia prowazekii and the origin of mitochondria.</title>
        <authorList>
            <person name="Andersson S.G.E."/>
            <person name="Zomorodipour A."/>
            <person name="Andersson J.O."/>
            <person name="Sicheritz-Ponten T."/>
            <person name="Alsmark U.C.M."/>
            <person name="Podowski R.M."/>
            <person name="Naeslund A.K."/>
            <person name="Eriksson A.-S."/>
            <person name="Winkler H.H."/>
            <person name="Kurland C.G."/>
        </authorList>
    </citation>
    <scope>NUCLEOTIDE SEQUENCE [LARGE SCALE GENOMIC DNA]</scope>
    <source>
        <strain>Madrid E</strain>
    </source>
</reference>
<sequence>MKKILFLTVICFCLSSIKAYANNNIHLSEFKNYLRTIKSVAIDFTQEDSYGKIVKGKLLIQKPYNFRCNYYPPFPLVIIGTKNFVSMYDYDMEQVSRISPSENIFNFLLEDNVDFDKDFVFESVINKGNIFNITIYHTRTEKRSEITFNKNIKQIEKLKIFEDHNIVTITFDKITKVQKFSDDLFKFKNPEIFSPPERLIKSEIEKKYVVSSK</sequence>
<organism>
    <name type="scientific">Rickettsia prowazekii (strain Madrid E)</name>
    <dbReference type="NCBI Taxonomy" id="272947"/>
    <lineage>
        <taxon>Bacteria</taxon>
        <taxon>Pseudomonadati</taxon>
        <taxon>Pseudomonadota</taxon>
        <taxon>Alphaproteobacteria</taxon>
        <taxon>Rickettsiales</taxon>
        <taxon>Rickettsiaceae</taxon>
        <taxon>Rickettsieae</taxon>
        <taxon>Rickettsia</taxon>
        <taxon>typhus group</taxon>
    </lineage>
</organism>
<gene>
    <name type="ordered locus">RP864</name>
</gene>
<dbReference type="EMBL" id="AJ235273">
    <property type="protein sequence ID" value="CAA15288.1"/>
    <property type="molecule type" value="Genomic_DNA"/>
</dbReference>
<dbReference type="PIR" id="H71648">
    <property type="entry name" value="H71648"/>
</dbReference>
<dbReference type="RefSeq" id="NP_221212.1">
    <property type="nucleotide sequence ID" value="NC_000963.1"/>
</dbReference>
<dbReference type="RefSeq" id="WP_004599686.1">
    <property type="nucleotide sequence ID" value="NC_000963.1"/>
</dbReference>
<dbReference type="SMR" id="Q9ZCA2"/>
<dbReference type="STRING" id="272947.gene:17555933"/>
<dbReference type="EnsemblBacteria" id="CAA15288">
    <property type="protein sequence ID" value="CAA15288"/>
    <property type="gene ID" value="CAA15288"/>
</dbReference>
<dbReference type="KEGG" id="rpr:RP864"/>
<dbReference type="PATRIC" id="fig|272947.5.peg.903"/>
<dbReference type="eggNOG" id="COG2834">
    <property type="taxonomic scope" value="Bacteria"/>
</dbReference>
<dbReference type="HOGENOM" id="CLU_1223970_0_0_5"/>
<dbReference type="OrthoDB" id="9800501at2"/>
<dbReference type="Proteomes" id="UP000002480">
    <property type="component" value="Chromosome"/>
</dbReference>
<dbReference type="CDD" id="cd16325">
    <property type="entry name" value="LolA"/>
    <property type="match status" value="1"/>
</dbReference>
<dbReference type="Gene3D" id="2.50.20.10">
    <property type="entry name" value="Lipoprotein localisation LolA/LolB/LppX"/>
    <property type="match status" value="1"/>
</dbReference>
<dbReference type="InterPro" id="IPR029046">
    <property type="entry name" value="LolA/LolB/LppX"/>
</dbReference>
<dbReference type="InterPro" id="IPR004564">
    <property type="entry name" value="OM_lipoprot_carrier_LolA-like"/>
</dbReference>
<dbReference type="PANTHER" id="PTHR35869">
    <property type="entry name" value="OUTER-MEMBRANE LIPOPROTEIN CARRIER PROTEIN"/>
    <property type="match status" value="1"/>
</dbReference>
<dbReference type="PANTHER" id="PTHR35869:SF1">
    <property type="entry name" value="OUTER-MEMBRANE LIPOPROTEIN CARRIER PROTEIN"/>
    <property type="match status" value="1"/>
</dbReference>
<dbReference type="Pfam" id="PF03548">
    <property type="entry name" value="LolA"/>
    <property type="match status" value="1"/>
</dbReference>
<dbReference type="SUPFAM" id="SSF89392">
    <property type="entry name" value="Prokaryotic lipoproteins and lipoprotein localization factors"/>
    <property type="match status" value="1"/>
</dbReference>
<proteinExistence type="inferred from homology"/>
<evidence type="ECO:0000255" key="1"/>
<keyword id="KW-1185">Reference proteome</keyword>
<keyword id="KW-0732">Signal</keyword>
<accession>Q9ZCA2</accession>
<protein>
    <recommendedName>
        <fullName>Uncharacterized protein RP864</fullName>
    </recommendedName>
</protein>
<name>Y864_RICPR</name>